<accession>A7ZTX3</accession>
<dbReference type="EC" id="4.2.1.9" evidence="1"/>
<dbReference type="EMBL" id="CP000800">
    <property type="protein sequence ID" value="ABV17245.1"/>
    <property type="molecule type" value="Genomic_DNA"/>
</dbReference>
<dbReference type="RefSeq" id="WP_001127394.1">
    <property type="nucleotide sequence ID" value="NC_009801.1"/>
</dbReference>
<dbReference type="SMR" id="A7ZTX3"/>
<dbReference type="GeneID" id="75204762"/>
<dbReference type="KEGG" id="ecw:EcE24377A_4282"/>
<dbReference type="HOGENOM" id="CLU_014271_4_2_6"/>
<dbReference type="UniPathway" id="UPA00047">
    <property type="reaction ID" value="UER00057"/>
</dbReference>
<dbReference type="UniPathway" id="UPA00049">
    <property type="reaction ID" value="UER00061"/>
</dbReference>
<dbReference type="Proteomes" id="UP000001122">
    <property type="component" value="Chromosome"/>
</dbReference>
<dbReference type="GO" id="GO:0005829">
    <property type="term" value="C:cytosol"/>
    <property type="evidence" value="ECO:0007669"/>
    <property type="project" value="TreeGrafter"/>
</dbReference>
<dbReference type="GO" id="GO:0051537">
    <property type="term" value="F:2 iron, 2 sulfur cluster binding"/>
    <property type="evidence" value="ECO:0007669"/>
    <property type="project" value="UniProtKB-UniRule"/>
</dbReference>
<dbReference type="GO" id="GO:0004160">
    <property type="term" value="F:dihydroxy-acid dehydratase activity"/>
    <property type="evidence" value="ECO:0007669"/>
    <property type="project" value="UniProtKB-UniRule"/>
</dbReference>
<dbReference type="GO" id="GO:0000287">
    <property type="term" value="F:magnesium ion binding"/>
    <property type="evidence" value="ECO:0007669"/>
    <property type="project" value="UniProtKB-UniRule"/>
</dbReference>
<dbReference type="GO" id="GO:0009097">
    <property type="term" value="P:isoleucine biosynthetic process"/>
    <property type="evidence" value="ECO:0007669"/>
    <property type="project" value="UniProtKB-UniRule"/>
</dbReference>
<dbReference type="GO" id="GO:0009099">
    <property type="term" value="P:L-valine biosynthetic process"/>
    <property type="evidence" value="ECO:0007669"/>
    <property type="project" value="UniProtKB-UniRule"/>
</dbReference>
<dbReference type="FunFam" id="3.50.30.80:FF:000001">
    <property type="entry name" value="Dihydroxy-acid dehydratase"/>
    <property type="match status" value="1"/>
</dbReference>
<dbReference type="Gene3D" id="3.50.30.80">
    <property type="entry name" value="IlvD/EDD C-terminal domain-like"/>
    <property type="match status" value="1"/>
</dbReference>
<dbReference type="HAMAP" id="MF_00012">
    <property type="entry name" value="IlvD"/>
    <property type="match status" value="1"/>
</dbReference>
<dbReference type="InterPro" id="IPR042096">
    <property type="entry name" value="Dihydro-acid_dehy_C"/>
</dbReference>
<dbReference type="InterPro" id="IPR004404">
    <property type="entry name" value="DihydroxyA_deHydtase"/>
</dbReference>
<dbReference type="InterPro" id="IPR020558">
    <property type="entry name" value="DiOHA_6PGluconate_deHydtase_CS"/>
</dbReference>
<dbReference type="InterPro" id="IPR056740">
    <property type="entry name" value="ILV_EDD_C"/>
</dbReference>
<dbReference type="InterPro" id="IPR000581">
    <property type="entry name" value="ILV_EDD_N"/>
</dbReference>
<dbReference type="InterPro" id="IPR037237">
    <property type="entry name" value="IlvD/EDD_N"/>
</dbReference>
<dbReference type="NCBIfam" id="TIGR00110">
    <property type="entry name" value="ilvD"/>
    <property type="match status" value="1"/>
</dbReference>
<dbReference type="NCBIfam" id="NF009103">
    <property type="entry name" value="PRK12448.1"/>
    <property type="match status" value="1"/>
</dbReference>
<dbReference type="PANTHER" id="PTHR43661">
    <property type="entry name" value="D-XYLONATE DEHYDRATASE"/>
    <property type="match status" value="1"/>
</dbReference>
<dbReference type="PANTHER" id="PTHR43661:SF3">
    <property type="entry name" value="D-XYLONATE DEHYDRATASE YAGF-RELATED"/>
    <property type="match status" value="1"/>
</dbReference>
<dbReference type="Pfam" id="PF24877">
    <property type="entry name" value="ILV_EDD_C"/>
    <property type="match status" value="1"/>
</dbReference>
<dbReference type="Pfam" id="PF00920">
    <property type="entry name" value="ILVD_EDD_N"/>
    <property type="match status" value="1"/>
</dbReference>
<dbReference type="SUPFAM" id="SSF143975">
    <property type="entry name" value="IlvD/EDD N-terminal domain-like"/>
    <property type="match status" value="1"/>
</dbReference>
<dbReference type="SUPFAM" id="SSF52016">
    <property type="entry name" value="LeuD/IlvD-like"/>
    <property type="match status" value="1"/>
</dbReference>
<dbReference type="PROSITE" id="PS00886">
    <property type="entry name" value="ILVD_EDD_1"/>
    <property type="match status" value="1"/>
</dbReference>
<dbReference type="PROSITE" id="PS00887">
    <property type="entry name" value="ILVD_EDD_2"/>
    <property type="match status" value="1"/>
</dbReference>
<protein>
    <recommendedName>
        <fullName evidence="1">Dihydroxy-acid dehydratase</fullName>
        <shortName evidence="1">DAD</shortName>
        <ecNumber evidence="1">4.2.1.9</ecNumber>
    </recommendedName>
</protein>
<gene>
    <name evidence="1" type="primary">ilvD</name>
    <name type="ordered locus">EcE24377A_4282</name>
</gene>
<evidence type="ECO:0000255" key="1">
    <source>
        <dbReference type="HAMAP-Rule" id="MF_00012"/>
    </source>
</evidence>
<reference key="1">
    <citation type="journal article" date="2008" name="J. Bacteriol.">
        <title>The pangenome structure of Escherichia coli: comparative genomic analysis of E. coli commensal and pathogenic isolates.</title>
        <authorList>
            <person name="Rasko D.A."/>
            <person name="Rosovitz M.J."/>
            <person name="Myers G.S.A."/>
            <person name="Mongodin E.F."/>
            <person name="Fricke W.F."/>
            <person name="Gajer P."/>
            <person name="Crabtree J."/>
            <person name="Sebaihia M."/>
            <person name="Thomson N.R."/>
            <person name="Chaudhuri R."/>
            <person name="Henderson I.R."/>
            <person name="Sperandio V."/>
            <person name="Ravel J."/>
        </authorList>
    </citation>
    <scope>NUCLEOTIDE SEQUENCE [LARGE SCALE GENOMIC DNA]</scope>
    <source>
        <strain>E24377A / ETEC</strain>
    </source>
</reference>
<name>ILVD_ECO24</name>
<organism>
    <name type="scientific">Escherichia coli O139:H28 (strain E24377A / ETEC)</name>
    <dbReference type="NCBI Taxonomy" id="331111"/>
    <lineage>
        <taxon>Bacteria</taxon>
        <taxon>Pseudomonadati</taxon>
        <taxon>Pseudomonadota</taxon>
        <taxon>Gammaproteobacteria</taxon>
        <taxon>Enterobacterales</taxon>
        <taxon>Enterobacteriaceae</taxon>
        <taxon>Escherichia</taxon>
    </lineage>
</organism>
<proteinExistence type="inferred from homology"/>
<sequence length="616" mass="65532">MPKYRSATTTHGRNMAGARALWRATGMTDADFGKPIIAVVNSFTQFVPGHVHLRDLGKLVAEQIEAAGGVAKEFNTIAVDDGIAMGHGGMLYSLPSRELIADSVEYMVNAHCADAMVCISNCDKITPGMLMASLRLNIPVIFVSGGPMEAGKTKLSDQIIKLDLVDAMIQGADPKVSDSQSDQVERSACPTCGSCSGMFTANSMNCLTEALGLSQPGNGSLLATHADRKQLFLNAGKRIVELTKRYYEQNDESALPRNIASKAAFENAMTLDIAMGGSTNTVLHLLAAAQEAEIDFTMSDIDKLSRKVPQLCKVAPSTQKYHMEDVHRAGGVIGILGELDRAGLLNRDVKNVLGLTLPQTLEQYDVMLTQDDAVKNMFRAGPAGIRTTQAFSQDCRWDSLDDDRANGCIRSLEHAYSKDGGLAVLYGNFAENGCIVKTAGVDDSILKFTGPAKVYESQDDAVEAILGGKVVAGDVVVIRYEGPKGGPGMQEMLYPTSFLKSMGLGKACALITDGRFSGGTSGLSIGHVSPEAASGGSIGLIEDGDLIAIDIPNRGIQLQVSDAELAARREAQEARGDKAWTPKNRERQVSFALRAYASLATSADKGAVRDKSKLGG</sequence>
<comment type="function">
    <text evidence="1">Functions in the biosynthesis of branched-chain amino acids. Catalyzes the dehydration of (2R,3R)-2,3-dihydroxy-3-methylpentanoate (2,3-dihydroxy-3-methylvalerate) into 2-oxo-3-methylpentanoate (2-oxo-3-methylvalerate) and of (2R)-2,3-dihydroxy-3-methylbutanoate (2,3-dihydroxyisovalerate) into 2-oxo-3-methylbutanoate (2-oxoisovalerate), the penultimate precursor to L-isoleucine and L-valine, respectively.</text>
</comment>
<comment type="catalytic activity">
    <reaction evidence="1">
        <text>(2R)-2,3-dihydroxy-3-methylbutanoate = 3-methyl-2-oxobutanoate + H2O</text>
        <dbReference type="Rhea" id="RHEA:24809"/>
        <dbReference type="ChEBI" id="CHEBI:11851"/>
        <dbReference type="ChEBI" id="CHEBI:15377"/>
        <dbReference type="ChEBI" id="CHEBI:49072"/>
        <dbReference type="EC" id="4.2.1.9"/>
    </reaction>
    <physiologicalReaction direction="left-to-right" evidence="1">
        <dbReference type="Rhea" id="RHEA:24810"/>
    </physiologicalReaction>
</comment>
<comment type="catalytic activity">
    <reaction evidence="1">
        <text>(2R,3R)-2,3-dihydroxy-3-methylpentanoate = (S)-3-methyl-2-oxopentanoate + H2O</text>
        <dbReference type="Rhea" id="RHEA:27694"/>
        <dbReference type="ChEBI" id="CHEBI:15377"/>
        <dbReference type="ChEBI" id="CHEBI:35146"/>
        <dbReference type="ChEBI" id="CHEBI:49258"/>
        <dbReference type="EC" id="4.2.1.9"/>
    </reaction>
    <physiologicalReaction direction="left-to-right" evidence="1">
        <dbReference type="Rhea" id="RHEA:27695"/>
    </physiologicalReaction>
</comment>
<comment type="cofactor">
    <cofactor evidence="1">
        <name>[2Fe-2S] cluster</name>
        <dbReference type="ChEBI" id="CHEBI:190135"/>
    </cofactor>
    <text evidence="1">Binds 1 [2Fe-2S] cluster per subunit. This cluster acts as a Lewis acid cofactor.</text>
</comment>
<comment type="cofactor">
    <cofactor evidence="1">
        <name>Mg(2+)</name>
        <dbReference type="ChEBI" id="CHEBI:18420"/>
    </cofactor>
</comment>
<comment type="pathway">
    <text evidence="1">Amino-acid biosynthesis; L-isoleucine biosynthesis; L-isoleucine from 2-oxobutanoate: step 3/4.</text>
</comment>
<comment type="pathway">
    <text evidence="1">Amino-acid biosynthesis; L-valine biosynthesis; L-valine from pyruvate: step 3/4.</text>
</comment>
<comment type="subunit">
    <text evidence="1">Homodimer.</text>
</comment>
<comment type="similarity">
    <text evidence="1">Belongs to the IlvD/Edd family.</text>
</comment>
<feature type="chain" id="PRO_1000057096" description="Dihydroxy-acid dehydratase">
    <location>
        <begin position="1"/>
        <end position="616"/>
    </location>
</feature>
<feature type="active site" description="Proton acceptor" evidence="1">
    <location>
        <position position="517"/>
    </location>
</feature>
<feature type="binding site" evidence="1">
    <location>
        <position position="81"/>
    </location>
    <ligand>
        <name>Mg(2+)</name>
        <dbReference type="ChEBI" id="CHEBI:18420"/>
    </ligand>
</feature>
<feature type="binding site" evidence="1">
    <location>
        <position position="122"/>
    </location>
    <ligand>
        <name>[2Fe-2S] cluster</name>
        <dbReference type="ChEBI" id="CHEBI:190135"/>
    </ligand>
</feature>
<feature type="binding site" evidence="1">
    <location>
        <position position="123"/>
    </location>
    <ligand>
        <name>Mg(2+)</name>
        <dbReference type="ChEBI" id="CHEBI:18420"/>
    </ligand>
</feature>
<feature type="binding site" description="via carbamate group" evidence="1">
    <location>
        <position position="124"/>
    </location>
    <ligand>
        <name>Mg(2+)</name>
        <dbReference type="ChEBI" id="CHEBI:18420"/>
    </ligand>
</feature>
<feature type="binding site" evidence="1">
    <location>
        <position position="195"/>
    </location>
    <ligand>
        <name>[2Fe-2S] cluster</name>
        <dbReference type="ChEBI" id="CHEBI:190135"/>
    </ligand>
</feature>
<feature type="binding site" evidence="1">
    <location>
        <position position="491"/>
    </location>
    <ligand>
        <name>Mg(2+)</name>
        <dbReference type="ChEBI" id="CHEBI:18420"/>
    </ligand>
</feature>
<feature type="modified residue" description="N6-carboxylysine" evidence="1">
    <location>
        <position position="124"/>
    </location>
</feature>
<keyword id="KW-0001">2Fe-2S</keyword>
<keyword id="KW-0028">Amino-acid biosynthesis</keyword>
<keyword id="KW-0100">Branched-chain amino acid biosynthesis</keyword>
<keyword id="KW-0408">Iron</keyword>
<keyword id="KW-0411">Iron-sulfur</keyword>
<keyword id="KW-0456">Lyase</keyword>
<keyword id="KW-0460">Magnesium</keyword>
<keyword id="KW-0479">Metal-binding</keyword>
<keyword id="KW-1185">Reference proteome</keyword>